<accession>O24876</accession>
<name>Y035_HELPY</name>
<proteinExistence type="evidence at protein level"/>
<reference key="1">
    <citation type="journal article" date="1997" name="Nature">
        <title>The complete genome sequence of the gastric pathogen Helicobacter pylori.</title>
        <authorList>
            <person name="Tomb J.-F."/>
            <person name="White O."/>
            <person name="Kerlavage A.R."/>
            <person name="Clayton R.A."/>
            <person name="Sutton G.G."/>
            <person name="Fleischmann R.D."/>
            <person name="Ketchum K.A."/>
            <person name="Klenk H.-P."/>
            <person name="Gill S.R."/>
            <person name="Dougherty B.A."/>
            <person name="Nelson K.E."/>
            <person name="Quackenbush J."/>
            <person name="Zhou L."/>
            <person name="Kirkness E.F."/>
            <person name="Peterson S.N."/>
            <person name="Loftus B.J."/>
            <person name="Richardson D.L."/>
            <person name="Dodson R.J."/>
            <person name="Khalak H.G."/>
            <person name="Glodek A."/>
            <person name="McKenney K."/>
            <person name="FitzGerald L.M."/>
            <person name="Lee N."/>
            <person name="Adams M.D."/>
            <person name="Hickey E.K."/>
            <person name="Berg D.E."/>
            <person name="Gocayne J.D."/>
            <person name="Utterback T.R."/>
            <person name="Peterson J.D."/>
            <person name="Kelley J.M."/>
            <person name="Cotton M.D."/>
            <person name="Weidman J.F."/>
            <person name="Fujii C."/>
            <person name="Bowman C."/>
            <person name="Watthey L."/>
            <person name="Wallin E."/>
            <person name="Hayes W.S."/>
            <person name="Borodovsky M."/>
            <person name="Karp P.D."/>
            <person name="Smith H.O."/>
            <person name="Fraser C.M."/>
            <person name="Venter J.C."/>
        </authorList>
    </citation>
    <scope>NUCLEOTIDE SEQUENCE [LARGE SCALE GENOMIC DNA]</scope>
    <source>
        <strain>ATCC 700392 / 26695</strain>
    </source>
</reference>
<reference key="2">
    <citation type="submission" date="2011-07" db="PDB data bank">
        <title>Crystal structure of uncharacterized protein HP0035 from Helicobacter pylori.</title>
        <authorList>
            <consortium name="Midwest center for structural genomics (MCSG)"/>
        </authorList>
    </citation>
    <scope>X-RAY CRYSTALLOGRAPHY (1.78 ANGSTROMS)</scope>
</reference>
<sequence>MDFSQLGGLLDGMKKEFSQLEEKNKDTIHTSKSGGGMVSVSFNGLGELVDLQIDDSLLEDKEAMQIYLMSALNDGYKAVEENRKNLAFNMLGNFAKL</sequence>
<dbReference type="EMBL" id="AE000511">
    <property type="protein sequence ID" value="AAD07104.1"/>
    <property type="molecule type" value="Genomic_DNA"/>
</dbReference>
<dbReference type="PIR" id="C64524">
    <property type="entry name" value="C64524"/>
</dbReference>
<dbReference type="RefSeq" id="NP_206837.1">
    <property type="nucleotide sequence ID" value="NC_000915.1"/>
</dbReference>
<dbReference type="RefSeq" id="WP_000347915.1">
    <property type="nucleotide sequence ID" value="NC_018939.1"/>
</dbReference>
<dbReference type="PDB" id="3F42">
    <property type="method" value="X-ray"/>
    <property type="resolution" value="1.78 A"/>
    <property type="chains" value="A/B=1-97"/>
</dbReference>
<dbReference type="PDBsum" id="3F42"/>
<dbReference type="SMR" id="O24876"/>
<dbReference type="DIP" id="DIP-3108N"/>
<dbReference type="FunCoup" id="O24876">
    <property type="interactions" value="275"/>
</dbReference>
<dbReference type="MINT" id="O24876"/>
<dbReference type="STRING" id="85962.HP_0035"/>
<dbReference type="PaxDb" id="85962-C694_00165"/>
<dbReference type="EnsemblBacteria" id="AAD07104">
    <property type="protein sequence ID" value="AAD07104"/>
    <property type="gene ID" value="HP_0035"/>
</dbReference>
<dbReference type="KEGG" id="heo:C694_00165"/>
<dbReference type="KEGG" id="hpy:HP_0035"/>
<dbReference type="PATRIC" id="fig|85962.47.peg.36"/>
<dbReference type="eggNOG" id="COG0718">
    <property type="taxonomic scope" value="Bacteria"/>
</dbReference>
<dbReference type="InParanoid" id="O24876"/>
<dbReference type="OrthoDB" id="5343857at2"/>
<dbReference type="PhylomeDB" id="O24876"/>
<dbReference type="EvolutionaryTrace" id="O24876"/>
<dbReference type="Proteomes" id="UP000000429">
    <property type="component" value="Chromosome"/>
</dbReference>
<dbReference type="GO" id="GO:0043590">
    <property type="term" value="C:bacterial nucleoid"/>
    <property type="evidence" value="ECO:0007669"/>
    <property type="project" value="UniProtKB-UniRule"/>
</dbReference>
<dbReference type="GO" id="GO:0005737">
    <property type="term" value="C:cytoplasm"/>
    <property type="evidence" value="ECO:0007669"/>
    <property type="project" value="UniProtKB-UniRule"/>
</dbReference>
<dbReference type="GO" id="GO:0003677">
    <property type="term" value="F:DNA binding"/>
    <property type="evidence" value="ECO:0007669"/>
    <property type="project" value="UniProtKB-UniRule"/>
</dbReference>
<dbReference type="Gene3D" id="3.30.1310.10">
    <property type="entry name" value="Nucleoid-associated protein YbaB-like domain"/>
    <property type="match status" value="1"/>
</dbReference>
<dbReference type="HAMAP" id="MF_00274">
    <property type="entry name" value="DNA_YbaB_EbfC"/>
    <property type="match status" value="1"/>
</dbReference>
<dbReference type="InterPro" id="IPR036894">
    <property type="entry name" value="YbaB-like_sf"/>
</dbReference>
<dbReference type="InterPro" id="IPR004401">
    <property type="entry name" value="YbaB/EbfC"/>
</dbReference>
<dbReference type="NCBIfam" id="TIGR00103">
    <property type="entry name" value="DNA_YbaB_EbfC"/>
    <property type="match status" value="1"/>
</dbReference>
<dbReference type="Pfam" id="PF02575">
    <property type="entry name" value="YbaB_DNA_bd"/>
    <property type="match status" value="1"/>
</dbReference>
<dbReference type="PIRSF" id="PIRSF004555">
    <property type="entry name" value="UCP004555"/>
    <property type="match status" value="1"/>
</dbReference>
<dbReference type="SUPFAM" id="SSF82607">
    <property type="entry name" value="YbaB-like"/>
    <property type="match status" value="1"/>
</dbReference>
<organism>
    <name type="scientific">Helicobacter pylori (strain ATCC 700392 / 26695)</name>
    <name type="common">Campylobacter pylori</name>
    <dbReference type="NCBI Taxonomy" id="85962"/>
    <lineage>
        <taxon>Bacteria</taxon>
        <taxon>Pseudomonadati</taxon>
        <taxon>Campylobacterota</taxon>
        <taxon>Epsilonproteobacteria</taxon>
        <taxon>Campylobacterales</taxon>
        <taxon>Helicobacteraceae</taxon>
        <taxon>Helicobacter</taxon>
    </lineage>
</organism>
<feature type="chain" id="PRO_0000170399" description="Nucleoid-associated protein HP_0035">
    <location>
        <begin position="1"/>
        <end position="97"/>
    </location>
</feature>
<feature type="helix" evidence="2">
    <location>
        <begin position="3"/>
        <end position="25"/>
    </location>
</feature>
<feature type="strand" evidence="2">
    <location>
        <begin position="28"/>
        <end position="33"/>
    </location>
</feature>
<feature type="helix" evidence="2">
    <location>
        <begin position="34"/>
        <end position="36"/>
    </location>
</feature>
<feature type="strand" evidence="2">
    <location>
        <begin position="38"/>
        <end position="43"/>
    </location>
</feature>
<feature type="strand" evidence="2">
    <location>
        <begin position="48"/>
        <end position="53"/>
    </location>
</feature>
<feature type="helix" evidence="2">
    <location>
        <begin position="55"/>
        <end position="59"/>
    </location>
</feature>
<feature type="helix" evidence="2">
    <location>
        <begin position="61"/>
        <end position="91"/>
    </location>
</feature>
<protein>
    <recommendedName>
        <fullName evidence="1">Nucleoid-associated protein HP_0035</fullName>
    </recommendedName>
</protein>
<comment type="function">
    <text evidence="1">Binds to DNA and alters its conformation. May be involved in regulation of gene expression, nucleoid organization and DNA protection.</text>
</comment>
<comment type="subunit">
    <text evidence="1">Homodimer.</text>
</comment>
<comment type="subcellular location">
    <subcellularLocation>
        <location evidence="1">Cytoplasm</location>
        <location evidence="1">Nucleoid</location>
    </subcellularLocation>
</comment>
<comment type="similarity">
    <text evidence="1">Belongs to the YbaB/EbfC family.</text>
</comment>
<evidence type="ECO:0000255" key="1">
    <source>
        <dbReference type="HAMAP-Rule" id="MF_00274"/>
    </source>
</evidence>
<evidence type="ECO:0007829" key="2">
    <source>
        <dbReference type="PDB" id="3F42"/>
    </source>
</evidence>
<keyword id="KW-0002">3D-structure</keyword>
<keyword id="KW-0963">Cytoplasm</keyword>
<keyword id="KW-0238">DNA-binding</keyword>
<keyword id="KW-1185">Reference proteome</keyword>
<gene>
    <name type="ordered locus">HP_0035</name>
</gene>